<sequence length="366" mass="42086">MAPSGPGGVRRRCRRVLYWIPVVFISLLLGWSYYAYAIQLCIVSMENIGEQVVCLMAYHLLFAMFVWSYWKTIFTLPMNPSKEFHLSYAEKELLEREPRGEAHQEVLRRAAKDLPIYTRTMSGAIRYCDRCRLIKPDRCHHCSVCDKCILKMDHHCPWVNNCVGFSNYKFFLLFLAYSLLYCLFIAATDLQYFIRFWTNGLPDTQAKFHIMFLFFAAAMFSVSLSSLFGYHCWLVSKNKSTLEAFRNPVFRHGTDKNGFSLGFSKNMRQVFGDEKKYWLLPIFSSQGDGCSFPTCLVNQDPEQPSTPAGLNSTAKNPENHQFPAKPLRESQSHLLTDSQTWTENSSNSGRCKAGMSNPALTMENET</sequence>
<dbReference type="EC" id="2.3.1.225" evidence="3"/>
<dbReference type="EC" id="2.3.1.-" evidence="1"/>
<dbReference type="EMBL" id="AF228917">
    <property type="protein sequence ID" value="AAF43032.1"/>
    <property type="molecule type" value="mRNA"/>
</dbReference>
<dbReference type="EMBL" id="AB217870">
    <property type="protein sequence ID" value="BAF37828.1"/>
    <property type="molecule type" value="mRNA"/>
</dbReference>
<dbReference type="RefSeq" id="NP_659564.3">
    <property type="nucleotide sequence ID" value="NM_145096.3"/>
</dbReference>
<dbReference type="SMR" id="Q9JKR5"/>
<dbReference type="FunCoup" id="Q9JKR5">
    <property type="interactions" value="2514"/>
</dbReference>
<dbReference type="STRING" id="10116.ENSRNOP00000033473"/>
<dbReference type="iPTMnet" id="Q9JKR5"/>
<dbReference type="PhosphoSitePlus" id="Q9JKR5"/>
<dbReference type="PaxDb" id="10116-ENSRNOP00000033473"/>
<dbReference type="Ensembl" id="ENSRNOT00000119635.1">
    <property type="protein sequence ID" value="ENSRNOP00000084203.1"/>
    <property type="gene ID" value="ENSRNOG00000022686.7"/>
</dbReference>
<dbReference type="GeneID" id="246326"/>
<dbReference type="KEGG" id="rno:246326"/>
<dbReference type="AGR" id="RGD:628681"/>
<dbReference type="CTD" id="51201"/>
<dbReference type="RGD" id="628681">
    <property type="gene designation" value="Zdhhc2"/>
</dbReference>
<dbReference type="eggNOG" id="KOG1315">
    <property type="taxonomic scope" value="Eukaryota"/>
</dbReference>
<dbReference type="GeneTree" id="ENSGT00940000153716"/>
<dbReference type="HOGENOM" id="CLU_027721_1_3_1"/>
<dbReference type="InParanoid" id="Q9JKR5"/>
<dbReference type="OMA" id="CFVVMHI"/>
<dbReference type="OrthoDB" id="9909019at2759"/>
<dbReference type="PhylomeDB" id="Q9JKR5"/>
<dbReference type="Reactome" id="R-RNO-5683826">
    <property type="pathway name" value="Surfactant metabolism"/>
</dbReference>
<dbReference type="PRO" id="PR:Q9JKR5"/>
<dbReference type="Proteomes" id="UP000002494">
    <property type="component" value="Chromosome 16"/>
</dbReference>
<dbReference type="Bgee" id="ENSRNOG00000022686">
    <property type="expression patterns" value="Expressed in cerebellum and 20 other cell types or tissues"/>
</dbReference>
<dbReference type="GO" id="GO:0005783">
    <property type="term" value="C:endoplasmic reticulum"/>
    <property type="evidence" value="ECO:0000266"/>
    <property type="project" value="RGD"/>
</dbReference>
<dbReference type="GO" id="GO:0005789">
    <property type="term" value="C:endoplasmic reticulum membrane"/>
    <property type="evidence" value="ECO:0000250"/>
    <property type="project" value="UniProtKB"/>
</dbReference>
<dbReference type="GO" id="GO:0098978">
    <property type="term" value="C:glutamatergic synapse"/>
    <property type="evidence" value="ECO:0000314"/>
    <property type="project" value="SynGO"/>
</dbReference>
<dbReference type="GO" id="GO:0005794">
    <property type="term" value="C:Golgi apparatus"/>
    <property type="evidence" value="ECO:0000250"/>
    <property type="project" value="UniProtKB"/>
</dbReference>
<dbReference type="GO" id="GO:0000139">
    <property type="term" value="C:Golgi membrane"/>
    <property type="evidence" value="ECO:0007669"/>
    <property type="project" value="UniProtKB-SubCell"/>
</dbReference>
<dbReference type="GO" id="GO:0005886">
    <property type="term" value="C:plasma membrane"/>
    <property type="evidence" value="ECO:0000250"/>
    <property type="project" value="UniProtKB"/>
</dbReference>
<dbReference type="GO" id="GO:0014069">
    <property type="term" value="C:postsynaptic density"/>
    <property type="evidence" value="ECO:0000314"/>
    <property type="project" value="UniProtKB"/>
</dbReference>
<dbReference type="GO" id="GO:0098837">
    <property type="term" value="C:postsynaptic recycling endosome"/>
    <property type="evidence" value="ECO:0000250"/>
    <property type="project" value="UniProtKB"/>
</dbReference>
<dbReference type="GO" id="GO:0098944">
    <property type="term" value="C:postsynaptic recycling endosome membrane"/>
    <property type="evidence" value="ECO:0007669"/>
    <property type="project" value="UniProtKB-SubCell"/>
</dbReference>
<dbReference type="GO" id="GO:0055038">
    <property type="term" value="C:recycling endosome membrane"/>
    <property type="evidence" value="ECO:0000266"/>
    <property type="project" value="RGD"/>
</dbReference>
<dbReference type="GO" id="GO:0016409">
    <property type="term" value="F:palmitoyltransferase activity"/>
    <property type="evidence" value="ECO:0000266"/>
    <property type="project" value="RGD"/>
</dbReference>
<dbReference type="GO" id="GO:0042803">
    <property type="term" value="F:protein homodimerization activity"/>
    <property type="evidence" value="ECO:0000266"/>
    <property type="project" value="RGD"/>
</dbReference>
<dbReference type="GO" id="GO:0019705">
    <property type="term" value="F:protein-cysteine S-myristoyltransferase activity"/>
    <property type="evidence" value="ECO:0000266"/>
    <property type="project" value="RGD"/>
</dbReference>
<dbReference type="GO" id="GO:0019706">
    <property type="term" value="F:protein-cysteine S-palmitoyltransferase activity"/>
    <property type="evidence" value="ECO:0000266"/>
    <property type="project" value="RGD"/>
</dbReference>
<dbReference type="GO" id="GO:0140439">
    <property type="term" value="F:protein-cysteine S-stearoyltransferase activity"/>
    <property type="evidence" value="ECO:0000266"/>
    <property type="project" value="RGD"/>
</dbReference>
<dbReference type="GO" id="GO:0018230">
    <property type="term" value="P:peptidyl-L-cysteine S-palmitoylation"/>
    <property type="evidence" value="ECO:0000315"/>
    <property type="project" value="UniProtKB"/>
</dbReference>
<dbReference type="GO" id="GO:1904719">
    <property type="term" value="P:positive regulation of AMPA glutamate receptor clustering"/>
    <property type="evidence" value="ECO:0000315"/>
    <property type="project" value="UniProtKB"/>
</dbReference>
<dbReference type="GO" id="GO:1905751">
    <property type="term" value="P:positive regulation of endosome to plasma membrane protein transport"/>
    <property type="evidence" value="ECO:0000315"/>
    <property type="project" value="UniProtKB"/>
</dbReference>
<dbReference type="GO" id="GO:1900273">
    <property type="term" value="P:positive regulation of long-term synaptic potentiation"/>
    <property type="evidence" value="ECO:0000315"/>
    <property type="project" value="UniProtKB"/>
</dbReference>
<dbReference type="GO" id="GO:1903044">
    <property type="term" value="P:protein localization to membrane raft"/>
    <property type="evidence" value="ECO:0000266"/>
    <property type="project" value="RGD"/>
</dbReference>
<dbReference type="GO" id="GO:0072659">
    <property type="term" value="P:protein localization to plasma membrane"/>
    <property type="evidence" value="ECO:0000315"/>
    <property type="project" value="UniProtKB"/>
</dbReference>
<dbReference type="GO" id="GO:1903539">
    <property type="term" value="P:protein localization to postsynaptic membrane"/>
    <property type="evidence" value="ECO:0000315"/>
    <property type="project" value="UniProtKB"/>
</dbReference>
<dbReference type="GO" id="GO:0006612">
    <property type="term" value="P:protein targeting to membrane"/>
    <property type="evidence" value="ECO:0000318"/>
    <property type="project" value="GO_Central"/>
</dbReference>
<dbReference type="GO" id="GO:0022407">
    <property type="term" value="P:regulation of cell-cell adhesion"/>
    <property type="evidence" value="ECO:0000250"/>
    <property type="project" value="UniProtKB"/>
</dbReference>
<dbReference type="GO" id="GO:0048168">
    <property type="term" value="P:regulation of neuronal synaptic plasticity"/>
    <property type="evidence" value="ECO:0000315"/>
    <property type="project" value="UniProtKB"/>
</dbReference>
<dbReference type="GO" id="GO:0150054">
    <property type="term" value="P:regulation of postsynaptic neurotransmitter receptor diffusion trapping"/>
    <property type="evidence" value="ECO:0000314"/>
    <property type="project" value="SynGO"/>
</dbReference>
<dbReference type="GO" id="GO:0042176">
    <property type="term" value="P:regulation of protein catabolic process"/>
    <property type="evidence" value="ECO:0000250"/>
    <property type="project" value="UniProtKB"/>
</dbReference>
<dbReference type="GO" id="GO:1903076">
    <property type="term" value="P:regulation of protein localization to plasma membrane"/>
    <property type="evidence" value="ECO:0000266"/>
    <property type="project" value="RGD"/>
</dbReference>
<dbReference type="GO" id="GO:0007416">
    <property type="term" value="P:synapse assembly"/>
    <property type="evidence" value="ECO:0000266"/>
    <property type="project" value="RGD"/>
</dbReference>
<dbReference type="GO" id="GO:0016188">
    <property type="term" value="P:synaptic vesicle maturation"/>
    <property type="evidence" value="ECO:0000318"/>
    <property type="project" value="GO_Central"/>
</dbReference>
<dbReference type="InterPro" id="IPR001594">
    <property type="entry name" value="Palmitoyltrfase_DHHC"/>
</dbReference>
<dbReference type="InterPro" id="IPR039859">
    <property type="entry name" value="PFA4/ZDH16/20/ERF2-like"/>
</dbReference>
<dbReference type="PANTHER" id="PTHR12246">
    <property type="entry name" value="PALMITOYLTRANSFERASE ZDHHC16"/>
    <property type="match status" value="1"/>
</dbReference>
<dbReference type="Pfam" id="PF01529">
    <property type="entry name" value="DHHC"/>
    <property type="match status" value="1"/>
</dbReference>
<dbReference type="PROSITE" id="PS50216">
    <property type="entry name" value="DHHC"/>
    <property type="match status" value="1"/>
</dbReference>
<organism>
    <name type="scientific">Rattus norvegicus</name>
    <name type="common">Rat</name>
    <dbReference type="NCBI Taxonomy" id="10116"/>
    <lineage>
        <taxon>Eukaryota</taxon>
        <taxon>Metazoa</taxon>
        <taxon>Chordata</taxon>
        <taxon>Craniata</taxon>
        <taxon>Vertebrata</taxon>
        <taxon>Euteleostomi</taxon>
        <taxon>Mammalia</taxon>
        <taxon>Eutheria</taxon>
        <taxon>Euarchontoglires</taxon>
        <taxon>Glires</taxon>
        <taxon>Rodentia</taxon>
        <taxon>Myomorpha</taxon>
        <taxon>Muroidea</taxon>
        <taxon>Muridae</taxon>
        <taxon>Murinae</taxon>
        <taxon>Rattus</taxon>
    </lineage>
</organism>
<evidence type="ECO:0000250" key="1">
    <source>
        <dbReference type="UniProtKB" id="P59267"/>
    </source>
</evidence>
<evidence type="ECO:0000250" key="2">
    <source>
        <dbReference type="UniProtKB" id="Q8IUH5"/>
    </source>
</evidence>
<evidence type="ECO:0000250" key="3">
    <source>
        <dbReference type="UniProtKB" id="Q9UIJ5"/>
    </source>
</evidence>
<evidence type="ECO:0000255" key="4"/>
<evidence type="ECO:0000255" key="5">
    <source>
        <dbReference type="PROSITE-ProRule" id="PRU00067"/>
    </source>
</evidence>
<evidence type="ECO:0000256" key="6">
    <source>
        <dbReference type="SAM" id="MobiDB-lite"/>
    </source>
</evidence>
<evidence type="ECO:0000269" key="7">
    <source>
    </source>
</evidence>
<evidence type="ECO:0000269" key="8">
    <source>
    </source>
</evidence>
<evidence type="ECO:0000269" key="9">
    <source>
    </source>
</evidence>
<evidence type="ECO:0000305" key="10"/>
<evidence type="ECO:0000312" key="11">
    <source>
        <dbReference type="EMBL" id="AAF43032.1"/>
    </source>
</evidence>
<evidence type="ECO:0000312" key="12">
    <source>
        <dbReference type="RGD" id="628681"/>
    </source>
</evidence>
<proteinExistence type="evidence at transcript level"/>
<feature type="chain" id="PRO_0000212861" description="Palmitoyltransferase ZDHHC2">
    <location>
        <begin position="1"/>
        <end position="366"/>
    </location>
</feature>
<feature type="topological domain" description="Cytoplasmic" evidence="10">
    <location>
        <begin position="1"/>
        <end position="15"/>
    </location>
</feature>
<feature type="transmembrane region" description="Helical" evidence="4">
    <location>
        <begin position="16"/>
        <end position="36"/>
    </location>
</feature>
<feature type="topological domain" description="Lumenal" evidence="10">
    <location>
        <begin position="37"/>
        <end position="47"/>
    </location>
</feature>
<feature type="transmembrane region" description="Helical" evidence="4">
    <location>
        <begin position="48"/>
        <end position="68"/>
    </location>
</feature>
<feature type="topological domain" description="Cytoplasmic" evidence="10">
    <location>
        <begin position="69"/>
        <end position="169"/>
    </location>
</feature>
<feature type="transmembrane region" description="Helical" evidence="4">
    <location>
        <begin position="170"/>
        <end position="190"/>
    </location>
</feature>
<feature type="topological domain" description="Lumenal" evidence="10">
    <location>
        <begin position="191"/>
        <end position="207"/>
    </location>
</feature>
<feature type="transmembrane region" description="Helical" evidence="4">
    <location>
        <begin position="208"/>
        <end position="228"/>
    </location>
</feature>
<feature type="topological domain" description="Cytoplasmic" evidence="10">
    <location>
        <begin position="229"/>
        <end position="366"/>
    </location>
</feature>
<feature type="domain" description="DHHC" evidence="5">
    <location>
        <begin position="126"/>
        <end position="176"/>
    </location>
</feature>
<feature type="region of interest" description="Disordered" evidence="6">
    <location>
        <begin position="297"/>
        <end position="366"/>
    </location>
</feature>
<feature type="region of interest" description="Mediates localization to plasma membrane and recycling endosomes" evidence="1">
    <location>
        <begin position="298"/>
        <end position="366"/>
    </location>
</feature>
<feature type="short sequence motif" description="Non-canonical dileucine endocytic signal" evidence="1">
    <location>
        <begin position="334"/>
        <end position="335"/>
    </location>
</feature>
<feature type="short sequence motif" description="NPxY-like endocytic signal" evidence="1">
    <location>
        <begin position="357"/>
        <end position="360"/>
    </location>
</feature>
<feature type="compositionally biased region" description="Polar residues" evidence="6">
    <location>
        <begin position="297"/>
        <end position="316"/>
    </location>
</feature>
<feature type="compositionally biased region" description="Polar residues" evidence="6">
    <location>
        <begin position="332"/>
        <end position="349"/>
    </location>
</feature>
<feature type="active site" description="S-palmitoyl cysteine intermediate" evidence="5">
    <location>
        <position position="156"/>
    </location>
</feature>
<protein>
    <recommendedName>
        <fullName evidence="10">Palmitoyltransferase ZDHHC2</fullName>
        <ecNumber evidence="3">2.3.1.225</ecNumber>
    </recommendedName>
    <alternativeName>
        <fullName evidence="1">Acyltransferase ZDHHC2</fullName>
        <ecNumber evidence="1">2.3.1.-</ecNumber>
    </alternativeName>
    <alternativeName>
        <fullName evidence="12">Zinc finger DHHC domain-containing protein 2</fullName>
        <shortName>DHHC-2</shortName>
    </alternativeName>
</protein>
<name>ZDHC2_RAT</name>
<reference key="1">
    <citation type="submission" date="2000-01" db="EMBL/GenBank/DDBJ databases">
        <authorList>
            <person name="Kullmann S."/>
            <person name="Esche H."/>
            <person name="Brockmann D."/>
        </authorList>
    </citation>
    <scope>NUCLEOTIDE SEQUENCE [MRNA]</scope>
    <source>
        <tissue>Pituitary</tissue>
    </source>
</reference>
<reference key="2">
    <citation type="submission" date="2005-06" db="EMBL/GenBank/DDBJ databases">
        <title>Rattus norvegicus dhhc2 mRNA.</title>
        <authorList>
            <person name="Zhang R."/>
            <person name="Tian Q."/>
            <person name="Okano A."/>
            <person name="Suzuki T."/>
        </authorList>
    </citation>
    <scope>NUCLEOTIDE SEQUENCE [MRNA]</scope>
</reference>
<reference key="3">
    <citation type="journal article" date="2009" name="J. Cell Biol.">
        <title>Mobile DHHC palmitoylating enzyme mediates activity-sensitive synaptic targeting of PSD-95.</title>
        <authorList>
            <person name="Noritake J."/>
            <person name="Fukata Y."/>
            <person name="Iwanaga T."/>
            <person name="Hosomi N."/>
            <person name="Tsutsumi R."/>
            <person name="Matsuda N."/>
            <person name="Tani H."/>
            <person name="Iwanari H."/>
            <person name="Mochizuki Y."/>
            <person name="Kodama T."/>
            <person name="Matsuura Y."/>
            <person name="Bredt D.S."/>
            <person name="Hamakubo T."/>
            <person name="Fukata M."/>
        </authorList>
    </citation>
    <scope>FUNCTION</scope>
    <scope>SUBCELLULAR LOCATION</scope>
</reference>
<reference key="4">
    <citation type="journal article" date="2011" name="J. Biol. Chem.">
        <title>Gi/o signaling and the palmitoyltransferase DHHC2 regulate palmitate cycling and shuttling of RGS7 family-binding protein.</title>
        <authorList>
            <person name="Jia L."/>
            <person name="Linder M.E."/>
            <person name="Blumer K.J."/>
        </authorList>
    </citation>
    <scope>FUNCTION</scope>
</reference>
<reference key="5">
    <citation type="journal article" date="2015" name="J. Neurosci.">
        <title>The palmitoyl acyltransferase DHHC2 regulates recycling endosome exocytosis and synaptic potentiation through palmitoylation of AKAP79/150.</title>
        <authorList>
            <person name="Woolfrey K.M."/>
            <person name="Sanderson J.L."/>
            <person name="Dell'Acqua M.L."/>
        </authorList>
    </citation>
    <scope>FUNCTION</scope>
</reference>
<keyword id="KW-0012">Acyltransferase</keyword>
<keyword id="KW-1003">Cell membrane</keyword>
<keyword id="KW-0256">Endoplasmic reticulum</keyword>
<keyword id="KW-0967">Endosome</keyword>
<keyword id="KW-0333">Golgi apparatus</keyword>
<keyword id="KW-0449">Lipoprotein</keyword>
<keyword id="KW-0472">Membrane</keyword>
<keyword id="KW-0564">Palmitate</keyword>
<keyword id="KW-1185">Reference proteome</keyword>
<keyword id="KW-0770">Synapse</keyword>
<keyword id="KW-0808">Transferase</keyword>
<keyword id="KW-0812">Transmembrane</keyword>
<keyword id="KW-1133">Transmembrane helix</keyword>
<comment type="function">
    <text evidence="1 3 7 8 9">Palmitoyltransferase that catalyzes the addition of palmitate onto various protein substrates and is involved in a variety of cellular processes (PubMed:19596852, PubMed:21343290, PubMed:25589740). Has no stringent fatty acid selectivity and in addition to palmitate can also transfer onto target proteins myristate from tetradecanoyl-CoA and stearate from octadecanoyl-CoA (By similarity). In the nervous system, plays a role in long term synaptic potentiation by palmitoylating AKAP5 through which it regulates protein trafficking from the dendritic recycling endosomes to the plasma membrane and controls both structural and functional plasticity at excitatory synapses (PubMed:25589740). In dendrites, mediates the palmitoylation of DLG4 when synaptic activity decreases and induces synaptic clustering of DLG4 and associated AMPA-type glutamate receptors (PubMed:19596852). Also mediates the de novo and turnover palmitoylation of RGS7BP, a shuttle for Gi/o-specific GTPase-activating proteins/GAPs, promoting its localization to the plasma membrane in response to the activation of G protein-coupled receptors. Through the localization of these GTPase-activating proteins/GAPs, it also probably plays a role in G protein-coupled receptors signaling in neurons (PubMed:21343290). Also probably plays a role in cell adhesion by palmitoylating CD9 and CD151 to regulate their expression and function. Palmitoylates the endoplasmic reticulum protein CKAP4 and regulates its localization to the plasma membrane. Could also palmitoylate LCK and regulate its localization to the plasma membrane (By similarity).</text>
</comment>
<comment type="catalytic activity">
    <reaction evidence="3">
        <text>L-cysteinyl-[protein] + hexadecanoyl-CoA = S-hexadecanoyl-L-cysteinyl-[protein] + CoA</text>
        <dbReference type="Rhea" id="RHEA:36683"/>
        <dbReference type="Rhea" id="RHEA-COMP:10131"/>
        <dbReference type="Rhea" id="RHEA-COMP:11032"/>
        <dbReference type="ChEBI" id="CHEBI:29950"/>
        <dbReference type="ChEBI" id="CHEBI:57287"/>
        <dbReference type="ChEBI" id="CHEBI:57379"/>
        <dbReference type="ChEBI" id="CHEBI:74151"/>
        <dbReference type="EC" id="2.3.1.225"/>
    </reaction>
    <physiologicalReaction direction="left-to-right" evidence="3">
        <dbReference type="Rhea" id="RHEA:36684"/>
    </physiologicalReaction>
</comment>
<comment type="catalytic activity">
    <reaction evidence="1">
        <text>L-cysteinyl-[protein] + tetradecanoyl-CoA = S-tetradecanoyl-L-cysteinyl-[protein] + CoA</text>
        <dbReference type="Rhea" id="RHEA:59736"/>
        <dbReference type="Rhea" id="RHEA-COMP:10131"/>
        <dbReference type="Rhea" id="RHEA-COMP:15433"/>
        <dbReference type="ChEBI" id="CHEBI:29950"/>
        <dbReference type="ChEBI" id="CHEBI:57287"/>
        <dbReference type="ChEBI" id="CHEBI:57385"/>
        <dbReference type="ChEBI" id="CHEBI:143199"/>
    </reaction>
    <physiologicalReaction direction="left-to-right" evidence="1">
        <dbReference type="Rhea" id="RHEA:59737"/>
    </physiologicalReaction>
</comment>
<comment type="catalytic activity">
    <reaction evidence="1">
        <text>L-cysteinyl-[protein] + octadecanoyl-CoA = S-octadecanoyl-L-cysteinyl-[protein] + CoA</text>
        <dbReference type="Rhea" id="RHEA:59740"/>
        <dbReference type="Rhea" id="RHEA-COMP:10131"/>
        <dbReference type="Rhea" id="RHEA-COMP:15434"/>
        <dbReference type="ChEBI" id="CHEBI:29950"/>
        <dbReference type="ChEBI" id="CHEBI:57287"/>
        <dbReference type="ChEBI" id="CHEBI:57394"/>
        <dbReference type="ChEBI" id="CHEBI:143200"/>
    </reaction>
    <physiologicalReaction direction="left-to-right" evidence="1">
        <dbReference type="Rhea" id="RHEA:59741"/>
    </physiologicalReaction>
</comment>
<comment type="subunit">
    <text evidence="3">Monomer. Homodimer. The monomeric form has a higher catalytic activity.</text>
</comment>
<comment type="subcellular location">
    <subcellularLocation>
        <location evidence="7">Postsynaptic density</location>
    </subcellularLocation>
    <subcellularLocation>
        <location evidence="1">Postsynaptic recycling endosome membrane</location>
        <topology evidence="4">Multi-pass membrane protein</topology>
    </subcellularLocation>
    <subcellularLocation>
        <location evidence="3">Cell membrane</location>
        <topology evidence="4">Multi-pass membrane protein</topology>
    </subcellularLocation>
    <subcellularLocation>
        <location evidence="3">Endoplasmic reticulum membrane</location>
        <topology evidence="4">Multi-pass membrane protein</topology>
    </subcellularLocation>
    <subcellularLocation>
        <location evidence="3">Golgi apparatus membrane</location>
        <topology evidence="4">Multi-pass membrane protein</topology>
    </subcellularLocation>
    <text evidence="7">Translocates to postsynaptic density when synaptic activity decreases.</text>
</comment>
<comment type="domain">
    <text evidence="2">The DHHC domain is required for palmitoyltransferase activity.</text>
</comment>
<comment type="PTM">
    <text evidence="3">Autopalmitoylated.</text>
</comment>
<comment type="similarity">
    <text evidence="10">Belongs to the DHHC palmitoyltransferase family.</text>
</comment>
<accession>Q9JKR5</accession>
<accession>A0P8F1</accession>
<gene>
    <name evidence="12" type="primary">Zdhhc2</name>
    <name evidence="11" type="synonym">Srec</name>
</gene>